<gene>
    <name type="primary">CNGC14</name>
    <name type="ordered locus">At2g24610</name>
    <name type="ORF">F25P17.9</name>
</gene>
<proteinExistence type="evidence at transcript level"/>
<organism>
    <name type="scientific">Arabidopsis thaliana</name>
    <name type="common">Mouse-ear cress</name>
    <dbReference type="NCBI Taxonomy" id="3702"/>
    <lineage>
        <taxon>Eukaryota</taxon>
        <taxon>Viridiplantae</taxon>
        <taxon>Streptophyta</taxon>
        <taxon>Embryophyta</taxon>
        <taxon>Tracheophyta</taxon>
        <taxon>Spermatophyta</taxon>
        <taxon>Magnoliopsida</taxon>
        <taxon>eudicotyledons</taxon>
        <taxon>Gunneridae</taxon>
        <taxon>Pentapetalae</taxon>
        <taxon>rosids</taxon>
        <taxon>malvids</taxon>
        <taxon>Brassicales</taxon>
        <taxon>Brassicaceae</taxon>
        <taxon>Camelineae</taxon>
        <taxon>Arabidopsis</taxon>
    </lineage>
</organism>
<comment type="function">
    <text>Probable cyclic nucleotide-gated ion channel.</text>
</comment>
<comment type="subunit">
    <text evidence="4">Homotetramer or heterotetramer.</text>
</comment>
<comment type="subcellular location">
    <subcellularLocation>
        <location evidence="4">Cell membrane</location>
        <topology evidence="4">Multi-pass membrane protein</topology>
    </subcellularLocation>
</comment>
<comment type="domain">
    <text evidence="1">The binding of calmodulin to the C-terminus might interfere with cyclic nucleotide binding and thus channel activation.</text>
</comment>
<comment type="similarity">
    <text evidence="4">Belongs to the cyclic nucleotide-gated cation channel (TC 1.A.1.5) family.</text>
</comment>
<comment type="sequence caution" evidence="4">
    <conflict type="erroneous gene model prediction">
        <sequence resource="EMBL-CDS" id="AAD23886"/>
    </conflict>
</comment>
<sequence length="726" mass="83454">MEFKRDNTVRFYGDEKQTIEVGEKRVPLFKSTTAPFMKQEVLPKKSKTRLKIPRFGRFKVFPENFEIERDKILDPGGDAVLQWNRVFLFWCLVALYVDPLFFFLSSVKRIGRSSCMTTDLKLGIVITFFRTLADLFYVLHIVIKFRTAYVSRTSRVFGRGELVKDPKLIARRYLRSDFIVDLIACLPLPQIVSWFILPSIRSSHSDHTTNALVLIVLVQYIPRLYLIFPLSAEIIKATGVVTTTAWAGAAYNLLQYMLASHILGSAWYLLSIERQATCWKAECHKESVPLQCVTDFFDCGTLHRDDRNNWQNTTVVFSNCDPSNNIQFTFGIFADALTKNVVSSPFLEKYLYCLWFGLQNLSSYGQNLSTSTSVLETMFAILVAIFGLVLFALLIGNMQTYLQSITVRLEEWRLKRRDTEEWMGHRLLPQNLRERVRRFVQYKWLATRGVDEETILHSLPADLRRDIQRHLCLDLVRRVPLFAQMDDQLLDAICERLASSLSTQGNYIVREGDPVTEMLFIIRGKLESSTTNGGRTGFFNSITLRPGDFCGEELLAWALLPKSTVNLPSSTRTVRALEEVEAFALQAGDLKFVANQFRRLHSKKLQHTFRYYSHQWRTWAACFVQVAWRRYKRKKLAKSLSLAESFSSYDEEEAVAVAATEEMSHEGEAQSGAKARHHTSNVKPHFAATILASRFAKNTRRTAHKLKDVEIPMLPKPDEPDFSVDD</sequence>
<reference key="1">
    <citation type="journal article" date="1999" name="Nature">
        <title>Sequence and analysis of chromosome 2 of the plant Arabidopsis thaliana.</title>
        <authorList>
            <person name="Lin X."/>
            <person name="Kaul S."/>
            <person name="Rounsley S.D."/>
            <person name="Shea T.P."/>
            <person name="Benito M.-I."/>
            <person name="Town C.D."/>
            <person name="Fujii C.Y."/>
            <person name="Mason T.M."/>
            <person name="Bowman C.L."/>
            <person name="Barnstead M.E."/>
            <person name="Feldblyum T.V."/>
            <person name="Buell C.R."/>
            <person name="Ketchum K.A."/>
            <person name="Lee J.J."/>
            <person name="Ronning C.M."/>
            <person name="Koo H.L."/>
            <person name="Moffat K.S."/>
            <person name="Cronin L.A."/>
            <person name="Shen M."/>
            <person name="Pai G."/>
            <person name="Van Aken S."/>
            <person name="Umayam L."/>
            <person name="Tallon L.J."/>
            <person name="Gill J.E."/>
            <person name="Adams M.D."/>
            <person name="Carrera A.J."/>
            <person name="Creasy T.H."/>
            <person name="Goodman H.M."/>
            <person name="Somerville C.R."/>
            <person name="Copenhaver G.P."/>
            <person name="Preuss D."/>
            <person name="Nierman W.C."/>
            <person name="White O."/>
            <person name="Eisen J.A."/>
            <person name="Salzberg S.L."/>
            <person name="Fraser C.M."/>
            <person name="Venter J.C."/>
        </authorList>
    </citation>
    <scope>NUCLEOTIDE SEQUENCE [LARGE SCALE GENOMIC DNA]</scope>
    <source>
        <strain>cv. Columbia</strain>
    </source>
</reference>
<reference key="2">
    <citation type="journal article" date="2017" name="Plant J.">
        <title>Araport11: a complete reannotation of the Arabidopsis thaliana reference genome.</title>
        <authorList>
            <person name="Cheng C.Y."/>
            <person name="Krishnakumar V."/>
            <person name="Chan A.P."/>
            <person name="Thibaud-Nissen F."/>
            <person name="Schobel S."/>
            <person name="Town C.D."/>
        </authorList>
    </citation>
    <scope>GENOME REANNOTATION</scope>
    <source>
        <strain>cv. Columbia</strain>
    </source>
</reference>
<reference key="3">
    <citation type="submission" date="2006-07" db="EMBL/GenBank/DDBJ databases">
        <title>Large-scale analysis of RIKEN Arabidopsis full-length (RAFL) cDNAs.</title>
        <authorList>
            <person name="Totoki Y."/>
            <person name="Seki M."/>
            <person name="Ishida J."/>
            <person name="Nakajima M."/>
            <person name="Enju A."/>
            <person name="Kamiya A."/>
            <person name="Narusaka M."/>
            <person name="Shin-i T."/>
            <person name="Nakagawa M."/>
            <person name="Sakamoto N."/>
            <person name="Oishi K."/>
            <person name="Kohara Y."/>
            <person name="Kobayashi M."/>
            <person name="Toyoda A."/>
            <person name="Sakaki Y."/>
            <person name="Sakurai T."/>
            <person name="Iida K."/>
            <person name="Akiyama K."/>
            <person name="Satou M."/>
            <person name="Toyoda T."/>
            <person name="Konagaya A."/>
            <person name="Carninci P."/>
            <person name="Kawai J."/>
            <person name="Hayashizaki Y."/>
            <person name="Shinozaki K."/>
        </authorList>
    </citation>
    <scope>NUCLEOTIDE SEQUENCE [LARGE SCALE MRNA]</scope>
    <source>
        <strain>cv. Columbia</strain>
    </source>
</reference>
<reference key="4">
    <citation type="journal article" date="2001" name="Plant Physiol.">
        <title>Phylogenetic relationships within cation transporter families of Arabidopsis.</title>
        <authorList>
            <person name="Maeser P."/>
            <person name="Thomine S."/>
            <person name="Schroeder J.I."/>
            <person name="Ward J.M."/>
            <person name="Hirschi K."/>
            <person name="Sze H."/>
            <person name="Talke I.N."/>
            <person name="Amtmann A."/>
            <person name="Maathuis F.J.M."/>
            <person name="Sanders D."/>
            <person name="Harper J.F."/>
            <person name="Tchieu J."/>
            <person name="Gribskov M."/>
            <person name="Persans M.W."/>
            <person name="Salt D.E."/>
            <person name="Kim S.A."/>
            <person name="Guerinot M.L."/>
        </authorList>
    </citation>
    <scope>GENE FAMILY</scope>
    <scope>NOMENCLATURE</scope>
</reference>
<keyword id="KW-0112">Calmodulin-binding</keyword>
<keyword id="KW-0114">cAMP</keyword>
<keyword id="KW-0116">cAMP-binding</keyword>
<keyword id="KW-1003">Cell membrane</keyword>
<keyword id="KW-0140">cGMP</keyword>
<keyword id="KW-0142">cGMP-binding</keyword>
<keyword id="KW-0407">Ion channel</keyword>
<keyword id="KW-0406">Ion transport</keyword>
<keyword id="KW-1071">Ligand-gated ion channel</keyword>
<keyword id="KW-0472">Membrane</keyword>
<keyword id="KW-0547">Nucleotide-binding</keyword>
<keyword id="KW-1185">Reference proteome</keyword>
<keyword id="KW-0812">Transmembrane</keyword>
<keyword id="KW-1133">Transmembrane helix</keyword>
<keyword id="KW-0813">Transport</keyword>
<accession>Q9SJA4</accession>
<accession>Q0WS20</accession>
<dbReference type="EMBL" id="AC006954">
    <property type="protein sequence ID" value="AAD23886.1"/>
    <property type="status" value="ALT_SEQ"/>
    <property type="molecule type" value="Genomic_DNA"/>
</dbReference>
<dbReference type="EMBL" id="CP002685">
    <property type="protein sequence ID" value="AEC07601.1"/>
    <property type="molecule type" value="Genomic_DNA"/>
</dbReference>
<dbReference type="EMBL" id="AK228122">
    <property type="protein sequence ID" value="BAF00079.1"/>
    <property type="molecule type" value="mRNA"/>
</dbReference>
<dbReference type="PIR" id="G84638">
    <property type="entry name" value="G84638"/>
</dbReference>
<dbReference type="RefSeq" id="NP_850056.1">
    <property type="nucleotide sequence ID" value="NM_179725.2"/>
</dbReference>
<dbReference type="BioGRID" id="2349">
    <property type="interactions" value="2"/>
</dbReference>
<dbReference type="FunCoup" id="Q9SJA4">
    <property type="interactions" value="208"/>
</dbReference>
<dbReference type="STRING" id="3702.Q9SJA4"/>
<dbReference type="iPTMnet" id="Q9SJA4"/>
<dbReference type="PaxDb" id="3702-AT2G24610.1"/>
<dbReference type="ProteomicsDB" id="220295"/>
<dbReference type="EnsemblPlants" id="AT2G24610.1">
    <property type="protein sequence ID" value="AT2G24610.1"/>
    <property type="gene ID" value="AT2G24610"/>
</dbReference>
<dbReference type="GeneID" id="816997"/>
<dbReference type="Gramene" id="AT2G24610.1">
    <property type="protein sequence ID" value="AT2G24610.1"/>
    <property type="gene ID" value="AT2G24610"/>
</dbReference>
<dbReference type="KEGG" id="ath:AT2G24610"/>
<dbReference type="Araport" id="AT2G24610"/>
<dbReference type="TAIR" id="AT2G24610">
    <property type="gene designation" value="CNGC14"/>
</dbReference>
<dbReference type="eggNOG" id="KOG0498">
    <property type="taxonomic scope" value="Eukaryota"/>
</dbReference>
<dbReference type="HOGENOM" id="CLU_013069_3_0_1"/>
<dbReference type="InParanoid" id="Q9SJA4"/>
<dbReference type="OMA" id="IFLQWNR"/>
<dbReference type="OrthoDB" id="421226at2759"/>
<dbReference type="PhylomeDB" id="Q9SJA4"/>
<dbReference type="PRO" id="PR:Q9SJA4"/>
<dbReference type="Proteomes" id="UP000006548">
    <property type="component" value="Chromosome 2"/>
</dbReference>
<dbReference type="ExpressionAtlas" id="Q9SJA4">
    <property type="expression patterns" value="baseline and differential"/>
</dbReference>
<dbReference type="GO" id="GO:0005886">
    <property type="term" value="C:plasma membrane"/>
    <property type="evidence" value="ECO:0000314"/>
    <property type="project" value="TAIR"/>
</dbReference>
<dbReference type="GO" id="GO:0005516">
    <property type="term" value="F:calmodulin binding"/>
    <property type="evidence" value="ECO:0007669"/>
    <property type="project" value="UniProtKB-KW"/>
</dbReference>
<dbReference type="GO" id="GO:0030552">
    <property type="term" value="F:cAMP binding"/>
    <property type="evidence" value="ECO:0007669"/>
    <property type="project" value="UniProtKB-KW"/>
</dbReference>
<dbReference type="GO" id="GO:0030553">
    <property type="term" value="F:cGMP binding"/>
    <property type="evidence" value="ECO:0007669"/>
    <property type="project" value="UniProtKB-KW"/>
</dbReference>
<dbReference type="GO" id="GO:0005249">
    <property type="term" value="F:voltage-gated potassium channel activity"/>
    <property type="evidence" value="ECO:0007669"/>
    <property type="project" value="InterPro"/>
</dbReference>
<dbReference type="CDD" id="cd00038">
    <property type="entry name" value="CAP_ED"/>
    <property type="match status" value="1"/>
</dbReference>
<dbReference type="FunFam" id="1.10.287.630:FF:000003">
    <property type="entry name" value="Cyclic nucleotide-gated ion channel 1"/>
    <property type="match status" value="1"/>
</dbReference>
<dbReference type="FunFam" id="2.60.120.10:FF:000024">
    <property type="entry name" value="Cyclic nucleotide-gated ion channel 1"/>
    <property type="match status" value="1"/>
</dbReference>
<dbReference type="Gene3D" id="1.10.287.70">
    <property type="match status" value="1"/>
</dbReference>
<dbReference type="Gene3D" id="1.10.287.630">
    <property type="entry name" value="Helix hairpin bin"/>
    <property type="match status" value="1"/>
</dbReference>
<dbReference type="Gene3D" id="2.60.120.10">
    <property type="entry name" value="Jelly Rolls"/>
    <property type="match status" value="1"/>
</dbReference>
<dbReference type="InterPro" id="IPR000595">
    <property type="entry name" value="cNMP-bd_dom"/>
</dbReference>
<dbReference type="InterPro" id="IPR018490">
    <property type="entry name" value="cNMP-bd_dom_sf"/>
</dbReference>
<dbReference type="InterPro" id="IPR005821">
    <property type="entry name" value="Ion_trans_dom"/>
</dbReference>
<dbReference type="InterPro" id="IPR003938">
    <property type="entry name" value="K_chnl_volt-dep_EAG/ELK/ERG"/>
</dbReference>
<dbReference type="InterPro" id="IPR014710">
    <property type="entry name" value="RmlC-like_jellyroll"/>
</dbReference>
<dbReference type="PANTHER" id="PTHR45651:SF9">
    <property type="entry name" value="CYCLIC NUCLEOTIDE-GATED ION CHANNEL 14-RELATED"/>
    <property type="match status" value="1"/>
</dbReference>
<dbReference type="PANTHER" id="PTHR45651">
    <property type="entry name" value="CYCLIC NUCLEOTIDE-GATED ION CHANNEL 15-RELATED-RELATED"/>
    <property type="match status" value="1"/>
</dbReference>
<dbReference type="Pfam" id="PF00027">
    <property type="entry name" value="cNMP_binding"/>
    <property type="match status" value="1"/>
</dbReference>
<dbReference type="Pfam" id="PF00520">
    <property type="entry name" value="Ion_trans"/>
    <property type="match status" value="1"/>
</dbReference>
<dbReference type="PRINTS" id="PR01463">
    <property type="entry name" value="EAGCHANLFMLY"/>
</dbReference>
<dbReference type="SMART" id="SM00100">
    <property type="entry name" value="cNMP"/>
    <property type="match status" value="1"/>
</dbReference>
<dbReference type="SUPFAM" id="SSF51206">
    <property type="entry name" value="cAMP-binding domain-like"/>
    <property type="match status" value="1"/>
</dbReference>
<dbReference type="SUPFAM" id="SSF81324">
    <property type="entry name" value="Voltage-gated potassium channels"/>
    <property type="match status" value="1"/>
</dbReference>
<dbReference type="PROSITE" id="PS50042">
    <property type="entry name" value="CNMP_BINDING_3"/>
    <property type="match status" value="1"/>
</dbReference>
<evidence type="ECO:0000250" key="1"/>
<evidence type="ECO:0000255" key="2"/>
<evidence type="ECO:0000256" key="3">
    <source>
        <dbReference type="SAM" id="MobiDB-lite"/>
    </source>
</evidence>
<evidence type="ECO:0000305" key="4"/>
<feature type="chain" id="PRO_0000219342" description="Probable cyclic nucleotide-gated ion channel 14">
    <location>
        <begin position="1"/>
        <end position="726"/>
    </location>
</feature>
<feature type="topological domain" description="Cytoplasmic" evidence="2">
    <location>
        <begin position="1"/>
        <end position="86"/>
    </location>
</feature>
<feature type="transmembrane region" description="Helical; Name=H1" evidence="2">
    <location>
        <begin position="87"/>
        <end position="107"/>
    </location>
</feature>
<feature type="topological domain" description="Extracellular" evidence="2">
    <location>
        <begin position="108"/>
        <end position="122"/>
    </location>
</feature>
<feature type="transmembrane region" description="Helical; Name=H2" evidence="2">
    <location>
        <begin position="123"/>
        <end position="143"/>
    </location>
</feature>
<feature type="topological domain" description="Cytoplasmic" evidence="2">
    <location>
        <begin position="144"/>
        <end position="177"/>
    </location>
</feature>
<feature type="transmembrane region" description="Helical; Name=H3" evidence="2">
    <location>
        <begin position="178"/>
        <end position="198"/>
    </location>
</feature>
<feature type="topological domain" description="Extracellular" evidence="2">
    <location>
        <begin position="199"/>
        <end position="211"/>
    </location>
</feature>
<feature type="transmembrane region" description="Helical; Name=H4" evidence="2">
    <location>
        <begin position="212"/>
        <end position="232"/>
    </location>
</feature>
<feature type="topological domain" description="Cytoplasmic" evidence="2">
    <location>
        <begin position="233"/>
        <end position="252"/>
    </location>
</feature>
<feature type="transmembrane region" description="Helical; Name=H5" evidence="2">
    <location>
        <begin position="253"/>
        <end position="273"/>
    </location>
</feature>
<feature type="topological domain" description="Extracellular" evidence="2">
    <location>
        <begin position="274"/>
        <end position="377"/>
    </location>
</feature>
<feature type="transmembrane region" description="Helical; Name=H6" evidence="2">
    <location>
        <begin position="378"/>
        <end position="398"/>
    </location>
</feature>
<feature type="topological domain" description="Cytoplasmic" evidence="2">
    <location>
        <begin position="399"/>
        <end position="726"/>
    </location>
</feature>
<feature type="domain" description="IQ">
    <location>
        <begin position="617"/>
        <end position="646"/>
    </location>
</feature>
<feature type="region of interest" description="Calmodulin-binding" evidence="1">
    <location>
        <begin position="597"/>
        <end position="612"/>
    </location>
</feature>
<feature type="region of interest" description="Disordered" evidence="3">
    <location>
        <begin position="707"/>
        <end position="726"/>
    </location>
</feature>
<feature type="binding site">
    <location>
        <begin position="481"/>
        <end position="605"/>
    </location>
    <ligand>
        <name>a nucleoside 3',5'-cyclic phosphate</name>
        <dbReference type="ChEBI" id="CHEBI:58464"/>
    </ligand>
</feature>
<feature type="binding site" evidence="1">
    <location>
        <position position="552"/>
    </location>
    <ligand>
        <name>a nucleoside 3',5'-cyclic phosphate</name>
        <dbReference type="ChEBI" id="CHEBI:58464"/>
    </ligand>
</feature>
<protein>
    <recommendedName>
        <fullName>Probable cyclic nucleotide-gated ion channel 14</fullName>
    </recommendedName>
    <alternativeName>
        <fullName>Cyclic nucleotide- and calmodulin-regulated ion channel 14</fullName>
    </alternativeName>
</protein>
<name>CNG14_ARATH</name>